<comment type="function">
    <text evidence="5">Probable transcriptional regulator involved in cell adhesion.</text>
</comment>
<comment type="subcellular location">
    <subcellularLocation>
        <location evidence="3">Cytoplasm</location>
    </subcellularLocation>
    <subcellularLocation>
        <location evidence="6">Nucleus</location>
    </subcellularLocation>
</comment>
<comment type="similarity">
    <text evidence="6">Belongs to the FLO8 family.</text>
</comment>
<dbReference type="EMBL" id="CU329671">
    <property type="protein sequence ID" value="CAB38690.1"/>
    <property type="molecule type" value="Genomic_DNA"/>
</dbReference>
<dbReference type="PIR" id="T39361">
    <property type="entry name" value="T39361"/>
</dbReference>
<dbReference type="RefSeq" id="NP_596834.1">
    <property type="nucleotide sequence ID" value="NM_001023855.2"/>
</dbReference>
<dbReference type="BioGRID" id="276726">
    <property type="interactions" value="52"/>
</dbReference>
<dbReference type="FunCoup" id="O94619">
    <property type="interactions" value="270"/>
</dbReference>
<dbReference type="STRING" id="284812.O94619"/>
<dbReference type="iPTMnet" id="O94619"/>
<dbReference type="PaxDb" id="4896-SPBC1289.10c.1"/>
<dbReference type="EnsemblFungi" id="SPBC1289.10c.1">
    <property type="protein sequence ID" value="SPBC1289.10c.1:pep"/>
    <property type="gene ID" value="SPBC1289.10c"/>
</dbReference>
<dbReference type="GeneID" id="2540193"/>
<dbReference type="KEGG" id="spo:2540193"/>
<dbReference type="PomBase" id="SPBC1289.10c">
    <property type="gene designation" value="adn2"/>
</dbReference>
<dbReference type="VEuPathDB" id="FungiDB:SPBC1289.10c"/>
<dbReference type="eggNOG" id="ENOG502R28W">
    <property type="taxonomic scope" value="Eukaryota"/>
</dbReference>
<dbReference type="HOGENOM" id="CLU_376492_0_0_1"/>
<dbReference type="InParanoid" id="O94619"/>
<dbReference type="OMA" id="NMAPHFF"/>
<dbReference type="PhylomeDB" id="O94619"/>
<dbReference type="PRO" id="PR:O94619"/>
<dbReference type="Proteomes" id="UP000002485">
    <property type="component" value="Chromosome II"/>
</dbReference>
<dbReference type="GO" id="GO:0005737">
    <property type="term" value="C:cytoplasm"/>
    <property type="evidence" value="ECO:0007005"/>
    <property type="project" value="PomBase"/>
</dbReference>
<dbReference type="GO" id="GO:0005634">
    <property type="term" value="C:nucleus"/>
    <property type="evidence" value="ECO:0000318"/>
    <property type="project" value="GO_Central"/>
</dbReference>
<dbReference type="GO" id="GO:0000981">
    <property type="term" value="F:DNA-binding transcription factor activity, RNA polymerase II-specific"/>
    <property type="evidence" value="ECO:0000266"/>
    <property type="project" value="PomBase"/>
</dbReference>
<dbReference type="GO" id="GO:0000978">
    <property type="term" value="F:RNA polymerase II cis-regulatory region sequence-specific DNA binding"/>
    <property type="evidence" value="ECO:0000266"/>
    <property type="project" value="PomBase"/>
</dbReference>
<dbReference type="GO" id="GO:0007155">
    <property type="term" value="P:cell adhesion"/>
    <property type="evidence" value="ECO:0007669"/>
    <property type="project" value="UniProtKB-KW"/>
</dbReference>
<dbReference type="GO" id="GO:0045944">
    <property type="term" value="P:positive regulation of transcription by RNA polymerase II"/>
    <property type="evidence" value="ECO:0000318"/>
    <property type="project" value="GO_Central"/>
</dbReference>
<dbReference type="InterPro" id="IPR006594">
    <property type="entry name" value="LisH"/>
</dbReference>
<dbReference type="PANTHER" id="PTHR45093:SF2">
    <property type="entry name" value="LISH DOMAIN-CONTAINING PROTEIN"/>
    <property type="match status" value="1"/>
</dbReference>
<dbReference type="PANTHER" id="PTHR45093">
    <property type="entry name" value="TRANSCRIPTION ACTIVATOR MSS11"/>
    <property type="match status" value="1"/>
</dbReference>
<dbReference type="Pfam" id="PF08513">
    <property type="entry name" value="LisH"/>
    <property type="match status" value="1"/>
</dbReference>
<dbReference type="Pfam" id="PF04503">
    <property type="entry name" value="SSDP"/>
    <property type="match status" value="1"/>
</dbReference>
<dbReference type="SMART" id="SM00667">
    <property type="entry name" value="LisH"/>
    <property type="match status" value="1"/>
</dbReference>
<dbReference type="PROSITE" id="PS50896">
    <property type="entry name" value="LISH"/>
    <property type="match status" value="1"/>
</dbReference>
<gene>
    <name type="primary">adn2</name>
    <name type="ORF">SPBC1289.10c</name>
</gene>
<evidence type="ECO:0000255" key="1">
    <source>
        <dbReference type="PROSITE-ProRule" id="PRU00126"/>
    </source>
</evidence>
<evidence type="ECO:0000256" key="2">
    <source>
        <dbReference type="SAM" id="MobiDB-lite"/>
    </source>
</evidence>
<evidence type="ECO:0000269" key="3">
    <source>
    </source>
</evidence>
<evidence type="ECO:0000269" key="4">
    <source>
    </source>
</evidence>
<evidence type="ECO:0000269" key="5">
    <source>
    </source>
</evidence>
<evidence type="ECO:0000305" key="6"/>
<accession>O94619</accession>
<proteinExistence type="evidence at protein level"/>
<reference key="1">
    <citation type="journal article" date="2002" name="Nature">
        <title>The genome sequence of Schizosaccharomyces pombe.</title>
        <authorList>
            <person name="Wood V."/>
            <person name="Gwilliam R."/>
            <person name="Rajandream M.A."/>
            <person name="Lyne M.H."/>
            <person name="Lyne R."/>
            <person name="Stewart A."/>
            <person name="Sgouros J.G."/>
            <person name="Peat N."/>
            <person name="Hayles J."/>
            <person name="Baker S.G."/>
            <person name="Basham D."/>
            <person name="Bowman S."/>
            <person name="Brooks K."/>
            <person name="Brown D."/>
            <person name="Brown S."/>
            <person name="Chillingworth T."/>
            <person name="Churcher C.M."/>
            <person name="Collins M."/>
            <person name="Connor R."/>
            <person name="Cronin A."/>
            <person name="Davis P."/>
            <person name="Feltwell T."/>
            <person name="Fraser A."/>
            <person name="Gentles S."/>
            <person name="Goble A."/>
            <person name="Hamlin N."/>
            <person name="Harris D.E."/>
            <person name="Hidalgo J."/>
            <person name="Hodgson G."/>
            <person name="Holroyd S."/>
            <person name="Hornsby T."/>
            <person name="Howarth S."/>
            <person name="Huckle E.J."/>
            <person name="Hunt S."/>
            <person name="Jagels K."/>
            <person name="James K.D."/>
            <person name="Jones L."/>
            <person name="Jones M."/>
            <person name="Leather S."/>
            <person name="McDonald S."/>
            <person name="McLean J."/>
            <person name="Mooney P."/>
            <person name="Moule S."/>
            <person name="Mungall K.L."/>
            <person name="Murphy L.D."/>
            <person name="Niblett D."/>
            <person name="Odell C."/>
            <person name="Oliver K."/>
            <person name="O'Neil S."/>
            <person name="Pearson D."/>
            <person name="Quail M.A."/>
            <person name="Rabbinowitsch E."/>
            <person name="Rutherford K.M."/>
            <person name="Rutter S."/>
            <person name="Saunders D."/>
            <person name="Seeger K."/>
            <person name="Sharp S."/>
            <person name="Skelton J."/>
            <person name="Simmonds M.N."/>
            <person name="Squares R."/>
            <person name="Squares S."/>
            <person name="Stevens K."/>
            <person name="Taylor K."/>
            <person name="Taylor R.G."/>
            <person name="Tivey A."/>
            <person name="Walsh S.V."/>
            <person name="Warren T."/>
            <person name="Whitehead S."/>
            <person name="Woodward J.R."/>
            <person name="Volckaert G."/>
            <person name="Aert R."/>
            <person name="Robben J."/>
            <person name="Grymonprez B."/>
            <person name="Weltjens I."/>
            <person name="Vanstreels E."/>
            <person name="Rieger M."/>
            <person name="Schaefer M."/>
            <person name="Mueller-Auer S."/>
            <person name="Gabel C."/>
            <person name="Fuchs M."/>
            <person name="Duesterhoeft A."/>
            <person name="Fritzc C."/>
            <person name="Holzer E."/>
            <person name="Moestl D."/>
            <person name="Hilbert H."/>
            <person name="Borzym K."/>
            <person name="Langer I."/>
            <person name="Beck A."/>
            <person name="Lehrach H."/>
            <person name="Reinhardt R."/>
            <person name="Pohl T.M."/>
            <person name="Eger P."/>
            <person name="Zimmermann W."/>
            <person name="Wedler H."/>
            <person name="Wambutt R."/>
            <person name="Purnelle B."/>
            <person name="Goffeau A."/>
            <person name="Cadieu E."/>
            <person name="Dreano S."/>
            <person name="Gloux S."/>
            <person name="Lelaure V."/>
            <person name="Mottier S."/>
            <person name="Galibert F."/>
            <person name="Aves S.J."/>
            <person name="Xiang Z."/>
            <person name="Hunt C."/>
            <person name="Moore K."/>
            <person name="Hurst S.M."/>
            <person name="Lucas M."/>
            <person name="Rochet M."/>
            <person name="Gaillardin C."/>
            <person name="Tallada V.A."/>
            <person name="Garzon A."/>
            <person name="Thode G."/>
            <person name="Daga R.R."/>
            <person name="Cruzado L."/>
            <person name="Jimenez J."/>
            <person name="Sanchez M."/>
            <person name="del Rey F."/>
            <person name="Benito J."/>
            <person name="Dominguez A."/>
            <person name="Revuelta J.L."/>
            <person name="Moreno S."/>
            <person name="Armstrong J."/>
            <person name="Forsburg S.L."/>
            <person name="Cerutti L."/>
            <person name="Lowe T."/>
            <person name="McCombie W.R."/>
            <person name="Paulsen I."/>
            <person name="Potashkin J."/>
            <person name="Shpakovski G.V."/>
            <person name="Ussery D."/>
            <person name="Barrell B.G."/>
            <person name="Nurse P."/>
        </authorList>
    </citation>
    <scope>NUCLEOTIDE SEQUENCE [LARGE SCALE GENOMIC DNA]</scope>
    <source>
        <strain>972 / ATCC 24843</strain>
    </source>
</reference>
<reference key="2">
    <citation type="journal article" date="2006" name="Nat. Biotechnol.">
        <title>ORFeome cloning and global analysis of protein localization in the fission yeast Schizosaccharomyces pombe.</title>
        <authorList>
            <person name="Matsuyama A."/>
            <person name="Arai R."/>
            <person name="Yashiroda Y."/>
            <person name="Shirai A."/>
            <person name="Kamata A."/>
            <person name="Sekido S."/>
            <person name="Kobayashi Y."/>
            <person name="Hashimoto A."/>
            <person name="Hamamoto M."/>
            <person name="Hiraoka Y."/>
            <person name="Horinouchi S."/>
            <person name="Yoshida M."/>
        </authorList>
    </citation>
    <scope>SUBCELLULAR LOCATION [LARGE SCALE ANALYSIS]</scope>
</reference>
<reference key="3">
    <citation type="journal article" date="2008" name="J. Proteome Res.">
        <title>Phosphoproteome analysis of fission yeast.</title>
        <authorList>
            <person name="Wilson-Grady J.T."/>
            <person name="Villen J."/>
            <person name="Gygi S.P."/>
        </authorList>
    </citation>
    <scope>PHOSPHORYLATION [LARGE SCALE ANALYSIS] AT SER-89</scope>
    <scope>IDENTIFICATION BY MASS SPECTROMETRY</scope>
</reference>
<reference key="4">
    <citation type="journal article" date="2009" name="Eukaryot. Cell">
        <title>Functional genomics of adhesion, invasion, and mycelial formation in Schizosaccharomyces pombe.</title>
        <authorList>
            <person name="Dodgson J."/>
            <person name="Avula H."/>
            <person name="Hoe K.L."/>
            <person name="Kim D.U."/>
            <person name="Park H.O."/>
            <person name="Hayles J."/>
            <person name="Armstrong J."/>
        </authorList>
    </citation>
    <scope>FUNCTION</scope>
</reference>
<keyword id="KW-0130">Cell adhesion</keyword>
<keyword id="KW-0963">Cytoplasm</keyword>
<keyword id="KW-0539">Nucleus</keyword>
<keyword id="KW-0597">Phosphoprotein</keyword>
<keyword id="KW-1185">Reference proteome</keyword>
<keyword id="KW-0804">Transcription</keyword>
<keyword id="KW-0805">Transcription regulation</keyword>
<feature type="chain" id="PRO_0000303959" description="Adhesion defective protein 2">
    <location>
        <begin position="1"/>
        <end position="743"/>
    </location>
</feature>
<feature type="domain" description="LisH" evidence="1">
    <location>
        <begin position="38"/>
        <end position="70"/>
    </location>
</feature>
<feature type="region of interest" description="Disordered" evidence="2">
    <location>
        <begin position="1"/>
        <end position="36"/>
    </location>
</feature>
<feature type="region of interest" description="Disordered" evidence="2">
    <location>
        <begin position="79"/>
        <end position="127"/>
    </location>
</feature>
<feature type="region of interest" description="Disordered" evidence="2">
    <location>
        <begin position="264"/>
        <end position="361"/>
    </location>
</feature>
<feature type="region of interest" description="Disordered" evidence="2">
    <location>
        <begin position="379"/>
        <end position="426"/>
    </location>
</feature>
<feature type="region of interest" description="Disordered" evidence="2">
    <location>
        <begin position="476"/>
        <end position="692"/>
    </location>
</feature>
<feature type="compositionally biased region" description="Basic and acidic residues" evidence="2">
    <location>
        <begin position="18"/>
        <end position="28"/>
    </location>
</feature>
<feature type="compositionally biased region" description="Polar residues" evidence="2">
    <location>
        <begin position="98"/>
        <end position="114"/>
    </location>
</feature>
<feature type="compositionally biased region" description="Low complexity" evidence="2">
    <location>
        <begin position="264"/>
        <end position="281"/>
    </location>
</feature>
<feature type="compositionally biased region" description="Polar residues" evidence="2">
    <location>
        <begin position="282"/>
        <end position="297"/>
    </location>
</feature>
<feature type="compositionally biased region" description="Polar residues" evidence="2">
    <location>
        <begin position="315"/>
        <end position="353"/>
    </location>
</feature>
<feature type="compositionally biased region" description="Polar residues" evidence="2">
    <location>
        <begin position="390"/>
        <end position="399"/>
    </location>
</feature>
<feature type="compositionally biased region" description="Polar residues" evidence="2">
    <location>
        <begin position="408"/>
        <end position="426"/>
    </location>
</feature>
<feature type="compositionally biased region" description="Polar residues" evidence="2">
    <location>
        <begin position="482"/>
        <end position="500"/>
    </location>
</feature>
<feature type="compositionally biased region" description="Low complexity" evidence="2">
    <location>
        <begin position="501"/>
        <end position="520"/>
    </location>
</feature>
<feature type="compositionally biased region" description="Polar residues" evidence="2">
    <location>
        <begin position="521"/>
        <end position="544"/>
    </location>
</feature>
<feature type="compositionally biased region" description="Polar residues" evidence="2">
    <location>
        <begin position="556"/>
        <end position="566"/>
    </location>
</feature>
<feature type="compositionally biased region" description="Low complexity" evidence="2">
    <location>
        <begin position="567"/>
        <end position="578"/>
    </location>
</feature>
<feature type="compositionally biased region" description="Polar residues" evidence="2">
    <location>
        <begin position="586"/>
        <end position="602"/>
    </location>
</feature>
<feature type="compositionally biased region" description="Low complexity" evidence="2">
    <location>
        <begin position="612"/>
        <end position="631"/>
    </location>
</feature>
<feature type="compositionally biased region" description="Polar residues" evidence="2">
    <location>
        <begin position="661"/>
        <end position="670"/>
    </location>
</feature>
<feature type="compositionally biased region" description="Low complexity" evidence="2">
    <location>
        <begin position="671"/>
        <end position="688"/>
    </location>
</feature>
<feature type="modified residue" description="Phosphoserine" evidence="4">
    <location>
        <position position="89"/>
    </location>
</feature>
<protein>
    <recommendedName>
        <fullName>Adhesion defective protein 2</fullName>
    </recommendedName>
    <alternativeName>
        <fullName>LisH domain-containing protein adn2</fullName>
    </alternativeName>
</protein>
<name>ADN2_SCHPO</name>
<organism>
    <name type="scientific">Schizosaccharomyces pombe (strain 972 / ATCC 24843)</name>
    <name type="common">Fission yeast</name>
    <dbReference type="NCBI Taxonomy" id="284812"/>
    <lineage>
        <taxon>Eukaryota</taxon>
        <taxon>Fungi</taxon>
        <taxon>Dikarya</taxon>
        <taxon>Ascomycota</taxon>
        <taxon>Taphrinomycotina</taxon>
        <taxon>Schizosaccharomycetes</taxon>
        <taxon>Schizosaccharomycetales</taxon>
        <taxon>Schizosaccharomycetaceae</taxon>
        <taxon>Schizosaccharomyces</taxon>
    </lineage>
</organism>
<sequence>MADPGLRSGVGLPSQQGQKHDLQKDQKQPHVNNADRTTQSLLNSYIYDYLIKKDYCEAARAFGREAQVQTLVRSQEETNSLAKRHKRMSPVAVKHEGISNNESSDENMNVNNGNLDSFSSSSAPPPPPILPIDSAGGFLIEWWNVFWDIYNARRGQGSEPAKAYMSHISNLRKKSRLNLQEIQKNSLHTGNTSHPYANASFPHDPANAMGQQIDSSQFHQGAGGLNDRNQHLMRQAMLNNQSRETFPPTAAQLQQLKQLHYRQLQSVQQQQKQHQQKKTPQSGSTPQMQNTTSQPTTHDTHPPKQQGPISDFRSIPSSPKTEGAPSNAQFRPSLPATPNGSVPQSNPLYDTTGLNGGQYPVVQNSAQPLLHEINFASNRNPHLKQGGAVPSSTLPQQQKSLDKPKPAQQPSTGQFSGNQMNQYGFSNSPYSQNMLYNFNGNANPSRLNPALKNYMEELKLLEQQNKKRLLLVSQEKERKGYTSASPDRPLSQTITESSVAKTKSTTPKSTDTPTEATTSPVKVSTKNSNTTENLNGINESNMPMLQNGLPLRTSGDHPSNYSNLIENSSTSDTNNADNGMDVMGNWQLQQTHSSRPTPNASSPLDVRSKQKPSSANSNAPTPAPTVNTTNPESSTNEATSVGPALEPSQGANVHKSDSELDNQNQSGKSNPDTSATPSAPTESTTVATKSSDNQLLDVGNSTDIDAALLNDFDFDKFLKDTSTGDDLWFGLFNLPDNEDSTAA</sequence>